<proteinExistence type="inferred from homology"/>
<reference key="1">
    <citation type="journal article" date="2011" name="J. Bacteriol.">
        <title>Genome of Ochrobactrum anthropi ATCC 49188 T, a versatile opportunistic pathogen and symbiont of several eukaryotic hosts.</title>
        <authorList>
            <person name="Chain P.S."/>
            <person name="Lang D.M."/>
            <person name="Comerci D.J."/>
            <person name="Malfatti S.A."/>
            <person name="Vergez L.M."/>
            <person name="Shin M."/>
            <person name="Ugalde R.A."/>
            <person name="Garcia E."/>
            <person name="Tolmasky M.E."/>
        </authorList>
    </citation>
    <scope>NUCLEOTIDE SEQUENCE [LARGE SCALE GENOMIC DNA]</scope>
    <source>
        <strain>ATCC 49188 / DSM 6882 / CCUG 24695 / JCM 21032 / LMG 3331 / NBRC 15819 / NCTC 12168 / Alc 37</strain>
    </source>
</reference>
<organism>
    <name type="scientific">Brucella anthropi (strain ATCC 49188 / DSM 6882 / CCUG 24695 / JCM 21032 / LMG 3331 / NBRC 15819 / NCTC 12168 / Alc 37)</name>
    <name type="common">Ochrobactrum anthropi</name>
    <dbReference type="NCBI Taxonomy" id="439375"/>
    <lineage>
        <taxon>Bacteria</taxon>
        <taxon>Pseudomonadati</taxon>
        <taxon>Pseudomonadota</taxon>
        <taxon>Alphaproteobacteria</taxon>
        <taxon>Hyphomicrobiales</taxon>
        <taxon>Brucellaceae</taxon>
        <taxon>Brucella/Ochrobactrum group</taxon>
        <taxon>Brucella</taxon>
    </lineage>
</organism>
<comment type="function">
    <text evidence="1">Catalyzes the interconversion of methylthioribose-1-phosphate (MTR-1-P) into methylthioribulose-1-phosphate (MTRu-1-P).</text>
</comment>
<comment type="catalytic activity">
    <reaction evidence="1">
        <text>5-(methylsulfanyl)-alpha-D-ribose 1-phosphate = 5-(methylsulfanyl)-D-ribulose 1-phosphate</text>
        <dbReference type="Rhea" id="RHEA:19989"/>
        <dbReference type="ChEBI" id="CHEBI:58533"/>
        <dbReference type="ChEBI" id="CHEBI:58548"/>
        <dbReference type="EC" id="5.3.1.23"/>
    </reaction>
</comment>
<comment type="pathway">
    <text evidence="1">Amino-acid biosynthesis; L-methionine biosynthesis via salvage pathway; L-methionine from S-methyl-5-thio-alpha-D-ribose 1-phosphate: step 1/6.</text>
</comment>
<comment type="similarity">
    <text evidence="2">Belongs to the eIF-2B alpha/beta/delta subunits family. MtnA subfamily.</text>
</comment>
<evidence type="ECO:0000255" key="1">
    <source>
        <dbReference type="HAMAP-Rule" id="MF_01678"/>
    </source>
</evidence>
<evidence type="ECO:0000305" key="2"/>
<sequence>MKVGERHYHTIWLNEDGRSVDIIDQRWLPHEFRVVTLKTVADVADAIRDMWVRGAPLIGVTAAYGVAIAMAKDPSDAHLDAVWEELNETRPTAINLRWALNAMREYLRPLPEAERADAAYKRAAEIAEEDVELNRAIGANGLDVIREIASKKKPGEPVRILTHCNAGWLATVDYGTATAPIYMAVEEGIPVHVYVDETRPRNQGAYLTAWEMNGHGVPHTLIVDNAGGHLMQHGDIDMVIVGTDRTTANGDVCNKIGTYLKALAARDNDVPFYVALPSPTIDWTVQDGVKEIPIEERTADEVSFVQGRAADGSIASVRISPEGSPAANPAFDVTPARLITGLITERGIATPSPEGLKALFPERS</sequence>
<protein>
    <recommendedName>
        <fullName evidence="1">Methylthioribose-1-phosphate isomerase</fullName>
        <shortName evidence="1">M1Pi</shortName>
        <shortName evidence="1">MTR-1-P isomerase</shortName>
        <ecNumber evidence="1">5.3.1.23</ecNumber>
    </recommendedName>
    <alternativeName>
        <fullName evidence="1">S-methyl-5-thioribose-1-phosphate isomerase</fullName>
    </alternativeName>
</protein>
<dbReference type="EC" id="5.3.1.23" evidence="1"/>
<dbReference type="EMBL" id="CP000763">
    <property type="protein sequence ID" value="ABS17503.1"/>
    <property type="molecule type" value="Genomic_DNA"/>
</dbReference>
<dbReference type="RefSeq" id="WP_011983109.1">
    <property type="nucleotide sequence ID" value="NC_009672.1"/>
</dbReference>
<dbReference type="SMR" id="A6X8E9"/>
<dbReference type="DNASU" id="5383324"/>
<dbReference type="KEGG" id="oan:Oant_4832"/>
<dbReference type="PATRIC" id="fig|439375.7.peg.4995"/>
<dbReference type="eggNOG" id="COG0182">
    <property type="taxonomic scope" value="Bacteria"/>
</dbReference>
<dbReference type="HOGENOM" id="CLU_016218_1_2_5"/>
<dbReference type="UniPathway" id="UPA00904">
    <property type="reaction ID" value="UER00874"/>
</dbReference>
<dbReference type="Proteomes" id="UP000002301">
    <property type="component" value="Plasmid pOANT04"/>
</dbReference>
<dbReference type="GO" id="GO:0046523">
    <property type="term" value="F:S-methyl-5-thioribose-1-phosphate isomerase activity"/>
    <property type="evidence" value="ECO:0007669"/>
    <property type="project" value="UniProtKB-UniRule"/>
</dbReference>
<dbReference type="GO" id="GO:0019509">
    <property type="term" value="P:L-methionine salvage from methylthioadenosine"/>
    <property type="evidence" value="ECO:0007669"/>
    <property type="project" value="UniProtKB-UniRule"/>
</dbReference>
<dbReference type="FunFam" id="1.20.120.420:FF:000003">
    <property type="entry name" value="Methylthioribose-1-phosphate isomerase"/>
    <property type="match status" value="1"/>
</dbReference>
<dbReference type="FunFam" id="3.40.50.10470:FF:000006">
    <property type="entry name" value="Methylthioribose-1-phosphate isomerase"/>
    <property type="match status" value="1"/>
</dbReference>
<dbReference type="Gene3D" id="1.20.120.420">
    <property type="entry name" value="translation initiation factor eif-2b, domain 1"/>
    <property type="match status" value="1"/>
</dbReference>
<dbReference type="Gene3D" id="3.40.50.10470">
    <property type="entry name" value="Translation initiation factor eif-2b, domain 2"/>
    <property type="match status" value="1"/>
</dbReference>
<dbReference type="HAMAP" id="MF_01678">
    <property type="entry name" value="Salvage_MtnA"/>
    <property type="match status" value="1"/>
</dbReference>
<dbReference type="InterPro" id="IPR000649">
    <property type="entry name" value="IF-2B-related"/>
</dbReference>
<dbReference type="InterPro" id="IPR005251">
    <property type="entry name" value="IF-M1Pi"/>
</dbReference>
<dbReference type="InterPro" id="IPR042529">
    <property type="entry name" value="IF_2B-like_C"/>
</dbReference>
<dbReference type="InterPro" id="IPR011559">
    <property type="entry name" value="Initiation_fac_2B_a/b/d"/>
</dbReference>
<dbReference type="InterPro" id="IPR027363">
    <property type="entry name" value="M1Pi_N"/>
</dbReference>
<dbReference type="InterPro" id="IPR037171">
    <property type="entry name" value="NagB/RpiA_transferase-like"/>
</dbReference>
<dbReference type="NCBIfam" id="TIGR00524">
    <property type="entry name" value="eIF-2B_rel"/>
    <property type="match status" value="1"/>
</dbReference>
<dbReference type="NCBIfam" id="NF004326">
    <property type="entry name" value="PRK05720.1"/>
    <property type="match status" value="1"/>
</dbReference>
<dbReference type="NCBIfam" id="TIGR00512">
    <property type="entry name" value="salvage_mtnA"/>
    <property type="match status" value="1"/>
</dbReference>
<dbReference type="PANTHER" id="PTHR43475">
    <property type="entry name" value="METHYLTHIORIBOSE-1-PHOSPHATE ISOMERASE"/>
    <property type="match status" value="1"/>
</dbReference>
<dbReference type="PANTHER" id="PTHR43475:SF1">
    <property type="entry name" value="METHYLTHIORIBOSE-1-PHOSPHATE ISOMERASE"/>
    <property type="match status" value="1"/>
</dbReference>
<dbReference type="Pfam" id="PF01008">
    <property type="entry name" value="IF-2B"/>
    <property type="match status" value="1"/>
</dbReference>
<dbReference type="SUPFAM" id="SSF100950">
    <property type="entry name" value="NagB/RpiA/CoA transferase-like"/>
    <property type="match status" value="1"/>
</dbReference>
<geneLocation type="plasmid">
    <name>pOANT04</name>
</geneLocation>
<feature type="chain" id="PRO_0000357213" description="Methylthioribose-1-phosphate isomerase">
    <location>
        <begin position="1"/>
        <end position="364"/>
    </location>
</feature>
<feature type="active site" description="Proton donor" evidence="1">
    <location>
        <position position="244"/>
    </location>
</feature>
<feature type="binding site" evidence="1">
    <location>
        <begin position="53"/>
        <end position="55"/>
    </location>
    <ligand>
        <name>substrate</name>
    </ligand>
</feature>
<feature type="binding site" evidence="1">
    <location>
        <position position="90"/>
    </location>
    <ligand>
        <name>substrate</name>
    </ligand>
</feature>
<feature type="binding site" evidence="1">
    <location>
        <position position="203"/>
    </location>
    <ligand>
        <name>substrate</name>
    </ligand>
</feature>
<feature type="binding site" evidence="1">
    <location>
        <begin position="254"/>
        <end position="255"/>
    </location>
    <ligand>
        <name>substrate</name>
    </ligand>
</feature>
<feature type="site" description="Transition state stabilizer" evidence="1">
    <location>
        <position position="164"/>
    </location>
</feature>
<keyword id="KW-0028">Amino-acid biosynthesis</keyword>
<keyword id="KW-0413">Isomerase</keyword>
<keyword id="KW-0486">Methionine biosynthesis</keyword>
<keyword id="KW-0614">Plasmid</keyword>
<keyword id="KW-1185">Reference proteome</keyword>
<gene>
    <name evidence="1" type="primary">mtnA</name>
    <name type="ordered locus">Oant_4832</name>
</gene>
<name>MTNA_BRUA4</name>
<accession>A6X8E9</accession>